<evidence type="ECO:0000255" key="1">
    <source>
        <dbReference type="HAMAP-Rule" id="MF_01386"/>
    </source>
</evidence>
<evidence type="ECO:0007829" key="2">
    <source>
        <dbReference type="PDB" id="8IWH"/>
    </source>
</evidence>
<gene>
    <name evidence="1" type="primary">psbX</name>
</gene>
<dbReference type="EMBL" id="EF067921">
    <property type="protein sequence ID" value="ABK20719.1"/>
    <property type="molecule type" value="Genomic_DNA"/>
</dbReference>
<dbReference type="RefSeq" id="YP_874496.1">
    <property type="nucleotide sequence ID" value="NC_008589.1"/>
</dbReference>
<dbReference type="PDB" id="8IWH">
    <property type="method" value="EM"/>
    <property type="resolution" value="2.68 A"/>
    <property type="chains" value="X/x=1-38"/>
</dbReference>
<dbReference type="PDBsum" id="8IWH"/>
<dbReference type="EMDB" id="EMD-35766"/>
<dbReference type="SMR" id="A0T0N4"/>
<dbReference type="STRING" id="35128.A0T0N4"/>
<dbReference type="GeneID" id="4524791"/>
<dbReference type="InParanoid" id="A0T0N4"/>
<dbReference type="GO" id="GO:0009535">
    <property type="term" value="C:chloroplast thylakoid membrane"/>
    <property type="evidence" value="ECO:0007669"/>
    <property type="project" value="UniProtKB-SubCell"/>
</dbReference>
<dbReference type="GO" id="GO:0009523">
    <property type="term" value="C:photosystem II"/>
    <property type="evidence" value="ECO:0007669"/>
    <property type="project" value="UniProtKB-KW"/>
</dbReference>
<dbReference type="GO" id="GO:0015979">
    <property type="term" value="P:photosynthesis"/>
    <property type="evidence" value="ECO:0007669"/>
    <property type="project" value="UniProtKB-UniRule"/>
</dbReference>
<dbReference type="Gene3D" id="1.20.5.510">
    <property type="entry name" value="Single helix bin"/>
    <property type="match status" value="1"/>
</dbReference>
<dbReference type="HAMAP" id="MF_01386">
    <property type="entry name" value="PSII_PsbX_1"/>
    <property type="match status" value="1"/>
</dbReference>
<dbReference type="InterPro" id="IPR009518">
    <property type="entry name" value="PSII_PsbX"/>
</dbReference>
<dbReference type="InterPro" id="IPR023431">
    <property type="entry name" value="PSII_PsbX_type_1_subfam"/>
</dbReference>
<dbReference type="Pfam" id="PF06596">
    <property type="entry name" value="PsbX"/>
    <property type="match status" value="1"/>
</dbReference>
<proteinExistence type="evidence at protein level"/>
<comment type="function">
    <text evidence="1">Involved in the binding and/or turnover of quinones at the Q(B) site of photosystem II (PSII). PSII is a light-driven water plastoquinone oxidoreductase, using light energy to abstract electrons from H(2)O, generating a proton gradient subsequently used for ATP formation.</text>
</comment>
<comment type="subunit">
    <text evidence="1">PSII is composed of 1 copy each of membrane proteins PsbA, PsbB, PsbC, PsbD, PsbE, PsbF, PsbH, PsbI, PsbJ, PsbK, PsbL, PsbM, PsbT, PsbX, PsbY, PsbZ, Psb30/Ycf12, at least 3 peripheral proteins of the oxygen-evolving complex and a large number of cofactors. It forms dimeric complexes.</text>
</comment>
<comment type="subcellular location">
    <subcellularLocation>
        <location evidence="1">Plastid</location>
        <location evidence="1">Chloroplast thylakoid membrane</location>
        <topology evidence="1">Single-pass membrane protein</topology>
    </subcellularLocation>
</comment>
<comment type="similarity">
    <text evidence="1">Belongs to the PsbX family. Type 1 subfamily.</text>
</comment>
<geneLocation type="chloroplast"/>
<keyword id="KW-0002">3D-structure</keyword>
<keyword id="KW-0150">Chloroplast</keyword>
<keyword id="KW-0472">Membrane</keyword>
<keyword id="KW-0602">Photosynthesis</keyword>
<keyword id="KW-0604">Photosystem II</keyword>
<keyword id="KW-0934">Plastid</keyword>
<keyword id="KW-0793">Thylakoid</keyword>
<keyword id="KW-0812">Transmembrane</keyword>
<keyword id="KW-1133">Transmembrane helix</keyword>
<protein>
    <recommendedName>
        <fullName evidence="1">Photosystem II reaction center protein X</fullName>
    </recommendedName>
</protein>
<sequence>MTTSLANFIASLTAGALVLSAIGIALIIISKNDRVQRS</sequence>
<reference key="1">
    <citation type="journal article" date="2007" name="Mol. Genet. Genomics">
        <title>Chloroplast genomes of the diatoms Phaeodactylum tricornutum and Thalassiosira pseudonana: comparison with other plastid genomes of the red lineage.</title>
        <authorList>
            <person name="Oudot-Le Secq M.-P."/>
            <person name="Grimwood J."/>
            <person name="Shapiro H."/>
            <person name="Armbrust E.V."/>
            <person name="Bowler C."/>
            <person name="Green B.R."/>
        </authorList>
    </citation>
    <scope>NUCLEOTIDE SEQUENCE [LARGE SCALE GENOMIC DNA]</scope>
    <source>
        <strain>CCMP1335 / NEPCC58 / CCAP 1085/12</strain>
    </source>
</reference>
<organism>
    <name type="scientific">Thalassiosira pseudonana</name>
    <name type="common">Marine diatom</name>
    <name type="synonym">Cyclotella nana</name>
    <dbReference type="NCBI Taxonomy" id="35128"/>
    <lineage>
        <taxon>Eukaryota</taxon>
        <taxon>Sar</taxon>
        <taxon>Stramenopiles</taxon>
        <taxon>Ochrophyta</taxon>
        <taxon>Bacillariophyta</taxon>
        <taxon>Coscinodiscophyceae</taxon>
        <taxon>Thalassiosirophycidae</taxon>
        <taxon>Thalassiosirales</taxon>
        <taxon>Thalassiosiraceae</taxon>
        <taxon>Thalassiosira</taxon>
    </lineage>
</organism>
<feature type="chain" id="PRO_0000345388" description="Photosystem II reaction center protein X">
    <location>
        <begin position="1"/>
        <end position="38"/>
    </location>
</feature>
<feature type="transmembrane region" description="Helical" evidence="1">
    <location>
        <begin position="9"/>
        <end position="29"/>
    </location>
</feature>
<feature type="helix" evidence="2">
    <location>
        <begin position="3"/>
        <end position="32"/>
    </location>
</feature>
<accession>A0T0N4</accession>
<name>PSBX_THAPS</name>